<name>SYA_BUCAP</name>
<evidence type="ECO:0000255" key="1">
    <source>
        <dbReference type="HAMAP-Rule" id="MF_00036"/>
    </source>
</evidence>
<gene>
    <name evidence="1" type="primary">alaS</name>
    <name type="ordered locus">BUsg_390</name>
</gene>
<protein>
    <recommendedName>
        <fullName evidence="1">Alanine--tRNA ligase</fullName>
        <ecNumber evidence="1">6.1.1.7</ecNumber>
    </recommendedName>
    <alternativeName>
        <fullName evidence="1">Alanyl-tRNA synthetase</fullName>
        <shortName evidence="1">AlaRS</shortName>
    </alternativeName>
</protein>
<reference key="1">
    <citation type="journal article" date="2002" name="Science">
        <title>50 million years of genomic stasis in endosymbiotic bacteria.</title>
        <authorList>
            <person name="Tamas I."/>
            <person name="Klasson L."/>
            <person name="Canbaeck B."/>
            <person name="Naeslund A.K."/>
            <person name="Eriksson A.-S."/>
            <person name="Wernegreen J.J."/>
            <person name="Sandstroem J.P."/>
            <person name="Moran N.A."/>
            <person name="Andersson S.G.E."/>
        </authorList>
    </citation>
    <scope>NUCLEOTIDE SEQUENCE [LARGE SCALE GENOMIC DNA]</scope>
    <source>
        <strain>Sg</strain>
    </source>
</reference>
<proteinExistence type="inferred from homology"/>
<dbReference type="EC" id="6.1.1.7" evidence="1"/>
<dbReference type="EMBL" id="AE013218">
    <property type="protein sequence ID" value="AAM67942.1"/>
    <property type="molecule type" value="Genomic_DNA"/>
</dbReference>
<dbReference type="RefSeq" id="WP_011053909.1">
    <property type="nucleotide sequence ID" value="NC_004061.1"/>
</dbReference>
<dbReference type="SMR" id="Q8K9E7"/>
<dbReference type="STRING" id="198804.BUsg_390"/>
<dbReference type="GeneID" id="93003859"/>
<dbReference type="KEGG" id="bas:BUsg_390"/>
<dbReference type="eggNOG" id="COG0013">
    <property type="taxonomic scope" value="Bacteria"/>
</dbReference>
<dbReference type="HOGENOM" id="CLU_004485_1_1_6"/>
<dbReference type="Proteomes" id="UP000000416">
    <property type="component" value="Chromosome"/>
</dbReference>
<dbReference type="GO" id="GO:0005829">
    <property type="term" value="C:cytosol"/>
    <property type="evidence" value="ECO:0007669"/>
    <property type="project" value="TreeGrafter"/>
</dbReference>
<dbReference type="GO" id="GO:0004813">
    <property type="term" value="F:alanine-tRNA ligase activity"/>
    <property type="evidence" value="ECO:0007669"/>
    <property type="project" value="UniProtKB-UniRule"/>
</dbReference>
<dbReference type="GO" id="GO:0002161">
    <property type="term" value="F:aminoacyl-tRNA deacylase activity"/>
    <property type="evidence" value="ECO:0007669"/>
    <property type="project" value="TreeGrafter"/>
</dbReference>
<dbReference type="GO" id="GO:0005524">
    <property type="term" value="F:ATP binding"/>
    <property type="evidence" value="ECO:0007669"/>
    <property type="project" value="UniProtKB-UniRule"/>
</dbReference>
<dbReference type="GO" id="GO:0000049">
    <property type="term" value="F:tRNA binding"/>
    <property type="evidence" value="ECO:0007669"/>
    <property type="project" value="UniProtKB-KW"/>
</dbReference>
<dbReference type="GO" id="GO:0008270">
    <property type="term" value="F:zinc ion binding"/>
    <property type="evidence" value="ECO:0007669"/>
    <property type="project" value="UniProtKB-UniRule"/>
</dbReference>
<dbReference type="GO" id="GO:0006419">
    <property type="term" value="P:alanyl-tRNA aminoacylation"/>
    <property type="evidence" value="ECO:0007669"/>
    <property type="project" value="UniProtKB-UniRule"/>
</dbReference>
<dbReference type="GO" id="GO:0045892">
    <property type="term" value="P:negative regulation of DNA-templated transcription"/>
    <property type="evidence" value="ECO:0007669"/>
    <property type="project" value="TreeGrafter"/>
</dbReference>
<dbReference type="CDD" id="cd00673">
    <property type="entry name" value="AlaRS_core"/>
    <property type="match status" value="1"/>
</dbReference>
<dbReference type="FunFam" id="3.10.310.40:FF:000001">
    <property type="entry name" value="Alanine--tRNA ligase"/>
    <property type="match status" value="1"/>
</dbReference>
<dbReference type="FunFam" id="3.30.930.10:FF:000004">
    <property type="entry name" value="Alanine--tRNA ligase"/>
    <property type="match status" value="1"/>
</dbReference>
<dbReference type="FunFam" id="3.30.980.10:FF:000004">
    <property type="entry name" value="Alanine--tRNA ligase, cytoplasmic"/>
    <property type="match status" value="1"/>
</dbReference>
<dbReference type="Gene3D" id="2.40.30.130">
    <property type="match status" value="1"/>
</dbReference>
<dbReference type="Gene3D" id="3.10.310.40">
    <property type="match status" value="1"/>
</dbReference>
<dbReference type="Gene3D" id="3.30.54.20">
    <property type="match status" value="1"/>
</dbReference>
<dbReference type="Gene3D" id="3.30.930.10">
    <property type="entry name" value="Bira Bifunctional Protein, Domain 2"/>
    <property type="match status" value="1"/>
</dbReference>
<dbReference type="Gene3D" id="3.30.980.10">
    <property type="entry name" value="Threonyl-trna Synthetase, Chain A, domain 2"/>
    <property type="match status" value="1"/>
</dbReference>
<dbReference type="HAMAP" id="MF_00036_B">
    <property type="entry name" value="Ala_tRNA_synth_B"/>
    <property type="match status" value="1"/>
</dbReference>
<dbReference type="InterPro" id="IPR045864">
    <property type="entry name" value="aa-tRNA-synth_II/BPL/LPL"/>
</dbReference>
<dbReference type="InterPro" id="IPR002318">
    <property type="entry name" value="Ala-tRNA-lgiase_IIc"/>
</dbReference>
<dbReference type="InterPro" id="IPR018162">
    <property type="entry name" value="Ala-tRNA-ligase_IIc_anticod-bd"/>
</dbReference>
<dbReference type="InterPro" id="IPR018165">
    <property type="entry name" value="Ala-tRNA-synth_IIc_core"/>
</dbReference>
<dbReference type="InterPro" id="IPR018164">
    <property type="entry name" value="Ala-tRNA-synth_IIc_N"/>
</dbReference>
<dbReference type="InterPro" id="IPR050058">
    <property type="entry name" value="Ala-tRNA_ligase"/>
</dbReference>
<dbReference type="InterPro" id="IPR023033">
    <property type="entry name" value="Ala_tRNA_ligase_euk/bac"/>
</dbReference>
<dbReference type="InterPro" id="IPR003156">
    <property type="entry name" value="DHHA1_dom"/>
</dbReference>
<dbReference type="InterPro" id="IPR018163">
    <property type="entry name" value="Thr/Ala-tRNA-synth_IIc_edit"/>
</dbReference>
<dbReference type="InterPro" id="IPR009000">
    <property type="entry name" value="Transl_B-barrel_sf"/>
</dbReference>
<dbReference type="InterPro" id="IPR012947">
    <property type="entry name" value="tRNA_SAD"/>
</dbReference>
<dbReference type="NCBIfam" id="TIGR00344">
    <property type="entry name" value="alaS"/>
    <property type="match status" value="1"/>
</dbReference>
<dbReference type="PANTHER" id="PTHR11777:SF9">
    <property type="entry name" value="ALANINE--TRNA LIGASE, CYTOPLASMIC"/>
    <property type="match status" value="1"/>
</dbReference>
<dbReference type="PANTHER" id="PTHR11777">
    <property type="entry name" value="ALANYL-TRNA SYNTHETASE"/>
    <property type="match status" value="1"/>
</dbReference>
<dbReference type="Pfam" id="PF02272">
    <property type="entry name" value="DHHA1"/>
    <property type="match status" value="1"/>
</dbReference>
<dbReference type="Pfam" id="PF01411">
    <property type="entry name" value="tRNA-synt_2c"/>
    <property type="match status" value="1"/>
</dbReference>
<dbReference type="Pfam" id="PF07973">
    <property type="entry name" value="tRNA_SAD"/>
    <property type="match status" value="1"/>
</dbReference>
<dbReference type="PRINTS" id="PR00980">
    <property type="entry name" value="TRNASYNTHALA"/>
</dbReference>
<dbReference type="SMART" id="SM00863">
    <property type="entry name" value="tRNA_SAD"/>
    <property type="match status" value="1"/>
</dbReference>
<dbReference type="SUPFAM" id="SSF55681">
    <property type="entry name" value="Class II aaRS and biotin synthetases"/>
    <property type="match status" value="1"/>
</dbReference>
<dbReference type="SUPFAM" id="SSF101353">
    <property type="entry name" value="Putative anticodon-binding domain of alanyl-tRNA synthetase (AlaRS)"/>
    <property type="match status" value="1"/>
</dbReference>
<dbReference type="SUPFAM" id="SSF55186">
    <property type="entry name" value="ThrRS/AlaRS common domain"/>
    <property type="match status" value="1"/>
</dbReference>
<dbReference type="SUPFAM" id="SSF50447">
    <property type="entry name" value="Translation proteins"/>
    <property type="match status" value="1"/>
</dbReference>
<dbReference type="PROSITE" id="PS50860">
    <property type="entry name" value="AA_TRNA_LIGASE_II_ALA"/>
    <property type="match status" value="1"/>
</dbReference>
<accession>Q8K9E7</accession>
<keyword id="KW-0030">Aminoacyl-tRNA synthetase</keyword>
<keyword id="KW-0067">ATP-binding</keyword>
<keyword id="KW-0963">Cytoplasm</keyword>
<keyword id="KW-0436">Ligase</keyword>
<keyword id="KW-0479">Metal-binding</keyword>
<keyword id="KW-0547">Nucleotide-binding</keyword>
<keyword id="KW-0648">Protein biosynthesis</keyword>
<keyword id="KW-0694">RNA-binding</keyword>
<keyword id="KW-0820">tRNA-binding</keyword>
<keyword id="KW-0862">Zinc</keyword>
<feature type="chain" id="PRO_0000075080" description="Alanine--tRNA ligase">
    <location>
        <begin position="1"/>
        <end position="883"/>
    </location>
</feature>
<feature type="binding site" evidence="1">
    <location>
        <position position="562"/>
    </location>
    <ligand>
        <name>Zn(2+)</name>
        <dbReference type="ChEBI" id="CHEBI:29105"/>
    </ligand>
</feature>
<feature type="binding site" evidence="1">
    <location>
        <position position="566"/>
    </location>
    <ligand>
        <name>Zn(2+)</name>
        <dbReference type="ChEBI" id="CHEBI:29105"/>
    </ligand>
</feature>
<feature type="binding site" evidence="1">
    <location>
        <position position="664"/>
    </location>
    <ligand>
        <name>Zn(2+)</name>
        <dbReference type="ChEBI" id="CHEBI:29105"/>
    </ligand>
</feature>
<feature type="binding site" evidence="1">
    <location>
        <position position="668"/>
    </location>
    <ligand>
        <name>Zn(2+)</name>
        <dbReference type="ChEBI" id="CHEBI:29105"/>
    </ligand>
</feature>
<sequence>MKKTTNEIRQSFLNFFKEKEHVIVPSSSLIPENDSTLLFTNAGMNQFKEYFLGQKKKFYPRVTTVQNCLRTGGKHNDLENVGYTKRHHTFFEMLGNFSFNDYFKKEAITYAWELLTSRKWFNIDKNKLWISVYEDDEETYKIWRDIIRIPCHHIVKIGSKNNSQYDSENFWQMGETGPCGPCTEIFYNYDDSNKSNDFLKDKNESFIEIWNIVFIEFNRISKTKIVPLINKSIDTGMGLERISAVLQNVHSNYKIDIFQKLIQKISNFTEIKDLNNISLKIIADHIRSCAFLIAENILPSNEHRGYVLRRIIRRALRHGHKIGIKNNFFYKLVPSLIEIMGDSAKILRKKEKIIEETLKIEEIQFSQTLDKGLKILNAEIKKSTNKTISGKTAFYLYDTFGFPIDLTSDICSEKNIKIDFKGFNIAKEEQKKRSSIKNKFYKDYNKDIIINDTCIFEGYKKNKTKSLVKYIFIKNESVFLIYKGQTATIFLDKTSFYPESGGQIGDIGELYHKKSRFIVENTKKYGDTIGHYGKLISGKIIVNDSIYSKINHVYRNAIQLNHSATHLLHAALQKVLGKNAIQKGSLVSNTHLRFDFSYSGNINLSQIQNIENIINKKIRSNDLIKIKNLSLEEAKKKKAIALFDYKYQSSVRVVFIKDFSIELCGGTHTKRTGNIGLFKIIEQSSVSSGIKRIEAVTGQQAIDYLHIKDNDMQNISFLLKCQNSKITEKIKKIIIQVEKLEKKTDQLQKRENIYQIKKLSKKINNIKGINLLINTFTNYDQKSMKMIIDQLKKELKISIIIFINKNKNDFTVIIRVTKNLINYITALKIINIFIKKANGKGGGKKEIAEGGGMNIKKLPMILNYIKSWITIQLENIKTKNFNN</sequence>
<comment type="function">
    <text evidence="1">Catalyzes the attachment of alanine to tRNA(Ala) in a two-step reaction: alanine is first activated by ATP to form Ala-AMP and then transferred to the acceptor end of tRNA(Ala). Also edits incorrectly charged Ser-tRNA(Ala) and Gly-tRNA(Ala) via its editing domain.</text>
</comment>
<comment type="catalytic activity">
    <reaction evidence="1">
        <text>tRNA(Ala) + L-alanine + ATP = L-alanyl-tRNA(Ala) + AMP + diphosphate</text>
        <dbReference type="Rhea" id="RHEA:12540"/>
        <dbReference type="Rhea" id="RHEA-COMP:9657"/>
        <dbReference type="Rhea" id="RHEA-COMP:9923"/>
        <dbReference type="ChEBI" id="CHEBI:30616"/>
        <dbReference type="ChEBI" id="CHEBI:33019"/>
        <dbReference type="ChEBI" id="CHEBI:57972"/>
        <dbReference type="ChEBI" id="CHEBI:78442"/>
        <dbReference type="ChEBI" id="CHEBI:78497"/>
        <dbReference type="ChEBI" id="CHEBI:456215"/>
        <dbReference type="EC" id="6.1.1.7"/>
    </reaction>
</comment>
<comment type="cofactor">
    <cofactor evidence="1">
        <name>Zn(2+)</name>
        <dbReference type="ChEBI" id="CHEBI:29105"/>
    </cofactor>
    <text evidence="1">Binds 1 zinc ion per subunit.</text>
</comment>
<comment type="subunit">
    <text evidence="1">Homotetramer.</text>
</comment>
<comment type="subcellular location">
    <subcellularLocation>
        <location evidence="1">Cytoplasm</location>
    </subcellularLocation>
</comment>
<comment type="domain">
    <text evidence="1">Consists of three domains; the N-terminal catalytic domain, the editing domain and the C-terminal C-Ala domain. The editing domain removes incorrectly charged amino acids, while the C-Ala domain, along with tRNA(Ala), serves as a bridge to cooperatively bring together the editing and aminoacylation centers thus stimulating deacylation of misacylated tRNAs.</text>
</comment>
<comment type="similarity">
    <text evidence="1">Belongs to the class-II aminoacyl-tRNA synthetase family.</text>
</comment>
<organism>
    <name type="scientific">Buchnera aphidicola subsp. Schizaphis graminum (strain Sg)</name>
    <dbReference type="NCBI Taxonomy" id="198804"/>
    <lineage>
        <taxon>Bacteria</taxon>
        <taxon>Pseudomonadati</taxon>
        <taxon>Pseudomonadota</taxon>
        <taxon>Gammaproteobacteria</taxon>
        <taxon>Enterobacterales</taxon>
        <taxon>Erwiniaceae</taxon>
        <taxon>Buchnera</taxon>
    </lineage>
</organism>